<feature type="chain" id="PRO_0000107646" description="Acetate kinase">
    <location>
        <begin position="1"/>
        <end position="400"/>
    </location>
</feature>
<feature type="active site" description="Proton donor/acceptor" evidence="1">
    <location>
        <position position="150"/>
    </location>
</feature>
<feature type="binding site" evidence="1">
    <location>
        <position position="10"/>
    </location>
    <ligand>
        <name>Mg(2+)</name>
        <dbReference type="ChEBI" id="CHEBI:18420"/>
    </ligand>
</feature>
<feature type="binding site" evidence="1">
    <location>
        <position position="17"/>
    </location>
    <ligand>
        <name>ATP</name>
        <dbReference type="ChEBI" id="CHEBI:30616"/>
    </ligand>
</feature>
<feature type="binding site" evidence="1">
    <location>
        <position position="91"/>
    </location>
    <ligand>
        <name>substrate</name>
    </ligand>
</feature>
<feature type="binding site" evidence="1">
    <location>
        <begin position="210"/>
        <end position="214"/>
    </location>
    <ligand>
        <name>ATP</name>
        <dbReference type="ChEBI" id="CHEBI:30616"/>
    </ligand>
</feature>
<feature type="binding site" evidence="1">
    <location>
        <begin position="285"/>
        <end position="287"/>
    </location>
    <ligand>
        <name>ATP</name>
        <dbReference type="ChEBI" id="CHEBI:30616"/>
    </ligand>
</feature>
<feature type="binding site" evidence="1">
    <location>
        <begin position="333"/>
        <end position="337"/>
    </location>
    <ligand>
        <name>ATP</name>
        <dbReference type="ChEBI" id="CHEBI:30616"/>
    </ligand>
</feature>
<feature type="binding site" evidence="1">
    <location>
        <position position="387"/>
    </location>
    <ligand>
        <name>Mg(2+)</name>
        <dbReference type="ChEBI" id="CHEBI:18420"/>
    </ligand>
</feature>
<feature type="site" description="Transition state stabilizer" evidence="1">
    <location>
        <position position="182"/>
    </location>
</feature>
<feature type="site" description="Transition state stabilizer" evidence="1">
    <location>
        <position position="243"/>
    </location>
</feature>
<dbReference type="EC" id="2.7.2.1" evidence="1"/>
<dbReference type="EMBL" id="AL590842">
    <property type="protein sequence ID" value="CAL21191.1"/>
    <property type="molecule type" value="Genomic_DNA"/>
</dbReference>
<dbReference type="EMBL" id="AE009952">
    <property type="protein sequence ID" value="AAM85191.1"/>
    <property type="molecule type" value="Genomic_DNA"/>
</dbReference>
<dbReference type="EMBL" id="AE017042">
    <property type="protein sequence ID" value="AAS62582.1"/>
    <property type="molecule type" value="Genomic_DNA"/>
</dbReference>
<dbReference type="PIR" id="AD0313">
    <property type="entry name" value="AD0313"/>
</dbReference>
<dbReference type="RefSeq" id="WP_002210288.1">
    <property type="nucleotide sequence ID" value="NZ_WUCM01000021.1"/>
</dbReference>
<dbReference type="RefSeq" id="YP_002347527.1">
    <property type="nucleotide sequence ID" value="NC_003143.1"/>
</dbReference>
<dbReference type="SMR" id="Q8ZDJ6"/>
<dbReference type="IntAct" id="Q8ZDJ6">
    <property type="interactions" value="1"/>
</dbReference>
<dbReference type="STRING" id="214092.YPO2566"/>
<dbReference type="PaxDb" id="214092-YPO2566"/>
<dbReference type="DNASU" id="1146569"/>
<dbReference type="EnsemblBacteria" id="AAS62582">
    <property type="protein sequence ID" value="AAS62582"/>
    <property type="gene ID" value="YP_2377"/>
</dbReference>
<dbReference type="GeneID" id="57976126"/>
<dbReference type="KEGG" id="ype:YPO2566"/>
<dbReference type="KEGG" id="ypk:y1622"/>
<dbReference type="KEGG" id="ypm:YP_2377"/>
<dbReference type="PATRIC" id="fig|214092.21.peg.2988"/>
<dbReference type="eggNOG" id="COG0282">
    <property type="taxonomic scope" value="Bacteria"/>
</dbReference>
<dbReference type="HOGENOM" id="CLU_020352_0_0_6"/>
<dbReference type="OMA" id="HKYVSQR"/>
<dbReference type="OrthoDB" id="9802453at2"/>
<dbReference type="UniPathway" id="UPA00340">
    <property type="reaction ID" value="UER00458"/>
</dbReference>
<dbReference type="Proteomes" id="UP000000815">
    <property type="component" value="Chromosome"/>
</dbReference>
<dbReference type="Proteomes" id="UP000001019">
    <property type="component" value="Chromosome"/>
</dbReference>
<dbReference type="Proteomes" id="UP000002490">
    <property type="component" value="Chromosome"/>
</dbReference>
<dbReference type="GO" id="GO:0005829">
    <property type="term" value="C:cytosol"/>
    <property type="evidence" value="ECO:0000318"/>
    <property type="project" value="GO_Central"/>
</dbReference>
<dbReference type="GO" id="GO:0008776">
    <property type="term" value="F:acetate kinase activity"/>
    <property type="evidence" value="ECO:0000318"/>
    <property type="project" value="GO_Central"/>
</dbReference>
<dbReference type="GO" id="GO:0005524">
    <property type="term" value="F:ATP binding"/>
    <property type="evidence" value="ECO:0007669"/>
    <property type="project" value="UniProtKB-KW"/>
</dbReference>
<dbReference type="GO" id="GO:0000287">
    <property type="term" value="F:magnesium ion binding"/>
    <property type="evidence" value="ECO:0007669"/>
    <property type="project" value="UniProtKB-UniRule"/>
</dbReference>
<dbReference type="GO" id="GO:0006083">
    <property type="term" value="P:acetate metabolic process"/>
    <property type="evidence" value="ECO:0000318"/>
    <property type="project" value="GO_Central"/>
</dbReference>
<dbReference type="GO" id="GO:0006085">
    <property type="term" value="P:acetyl-CoA biosynthetic process"/>
    <property type="evidence" value="ECO:0007669"/>
    <property type="project" value="UniProtKB-UniRule"/>
</dbReference>
<dbReference type="CDD" id="cd24010">
    <property type="entry name" value="ASKHA_NBD_AcK_PK"/>
    <property type="match status" value="1"/>
</dbReference>
<dbReference type="FunFam" id="3.30.420.40:FF:000041">
    <property type="entry name" value="Acetate kinase"/>
    <property type="match status" value="1"/>
</dbReference>
<dbReference type="FunFam" id="3.30.420.40:FF:000042">
    <property type="entry name" value="Acetate kinase"/>
    <property type="match status" value="1"/>
</dbReference>
<dbReference type="Gene3D" id="3.30.420.40">
    <property type="match status" value="2"/>
</dbReference>
<dbReference type="HAMAP" id="MF_00020">
    <property type="entry name" value="Acetate_kinase"/>
    <property type="match status" value="1"/>
</dbReference>
<dbReference type="InterPro" id="IPR004372">
    <property type="entry name" value="Ac/propionate_kinase"/>
</dbReference>
<dbReference type="InterPro" id="IPR000890">
    <property type="entry name" value="Aliphatic_acid_kin_short-chain"/>
</dbReference>
<dbReference type="InterPro" id="IPR023865">
    <property type="entry name" value="Aliphatic_acid_kinase_CS"/>
</dbReference>
<dbReference type="InterPro" id="IPR043129">
    <property type="entry name" value="ATPase_NBD"/>
</dbReference>
<dbReference type="NCBIfam" id="TIGR00016">
    <property type="entry name" value="ackA"/>
    <property type="match status" value="1"/>
</dbReference>
<dbReference type="PANTHER" id="PTHR21060">
    <property type="entry name" value="ACETATE KINASE"/>
    <property type="match status" value="1"/>
</dbReference>
<dbReference type="PANTHER" id="PTHR21060:SF21">
    <property type="entry name" value="ACETATE KINASE"/>
    <property type="match status" value="1"/>
</dbReference>
<dbReference type="Pfam" id="PF00871">
    <property type="entry name" value="Acetate_kinase"/>
    <property type="match status" value="1"/>
</dbReference>
<dbReference type="PIRSF" id="PIRSF000722">
    <property type="entry name" value="Acetate_prop_kin"/>
    <property type="match status" value="1"/>
</dbReference>
<dbReference type="PRINTS" id="PR00471">
    <property type="entry name" value="ACETATEKNASE"/>
</dbReference>
<dbReference type="SUPFAM" id="SSF53067">
    <property type="entry name" value="Actin-like ATPase domain"/>
    <property type="match status" value="2"/>
</dbReference>
<dbReference type="PROSITE" id="PS01075">
    <property type="entry name" value="ACETATE_KINASE_1"/>
    <property type="match status" value="1"/>
</dbReference>
<dbReference type="PROSITE" id="PS01076">
    <property type="entry name" value="ACETATE_KINASE_2"/>
    <property type="match status" value="1"/>
</dbReference>
<accession>Q8ZDJ6</accession>
<accession>Q0WDW1</accession>
<evidence type="ECO:0000255" key="1">
    <source>
        <dbReference type="HAMAP-Rule" id="MF_00020"/>
    </source>
</evidence>
<reference key="1">
    <citation type="journal article" date="2001" name="Nature">
        <title>Genome sequence of Yersinia pestis, the causative agent of plague.</title>
        <authorList>
            <person name="Parkhill J."/>
            <person name="Wren B.W."/>
            <person name="Thomson N.R."/>
            <person name="Titball R.W."/>
            <person name="Holden M.T.G."/>
            <person name="Prentice M.B."/>
            <person name="Sebaihia M."/>
            <person name="James K.D."/>
            <person name="Churcher C.M."/>
            <person name="Mungall K.L."/>
            <person name="Baker S."/>
            <person name="Basham D."/>
            <person name="Bentley S.D."/>
            <person name="Brooks K."/>
            <person name="Cerdeno-Tarraga A.-M."/>
            <person name="Chillingworth T."/>
            <person name="Cronin A."/>
            <person name="Davies R.M."/>
            <person name="Davis P."/>
            <person name="Dougan G."/>
            <person name="Feltwell T."/>
            <person name="Hamlin N."/>
            <person name="Holroyd S."/>
            <person name="Jagels K."/>
            <person name="Karlyshev A.V."/>
            <person name="Leather S."/>
            <person name="Moule S."/>
            <person name="Oyston P.C.F."/>
            <person name="Quail M.A."/>
            <person name="Rutherford K.M."/>
            <person name="Simmonds M."/>
            <person name="Skelton J."/>
            <person name="Stevens K."/>
            <person name="Whitehead S."/>
            <person name="Barrell B.G."/>
        </authorList>
    </citation>
    <scope>NUCLEOTIDE SEQUENCE [LARGE SCALE GENOMIC DNA]</scope>
    <source>
        <strain>CO-92 / Biovar Orientalis</strain>
    </source>
</reference>
<reference key="2">
    <citation type="journal article" date="2002" name="J. Bacteriol.">
        <title>Genome sequence of Yersinia pestis KIM.</title>
        <authorList>
            <person name="Deng W."/>
            <person name="Burland V."/>
            <person name="Plunkett G. III"/>
            <person name="Boutin A."/>
            <person name="Mayhew G.F."/>
            <person name="Liss P."/>
            <person name="Perna N.T."/>
            <person name="Rose D.J."/>
            <person name="Mau B."/>
            <person name="Zhou S."/>
            <person name="Schwartz D.C."/>
            <person name="Fetherston J.D."/>
            <person name="Lindler L.E."/>
            <person name="Brubaker R.R."/>
            <person name="Plano G.V."/>
            <person name="Straley S.C."/>
            <person name="McDonough K.A."/>
            <person name="Nilles M.L."/>
            <person name="Matson J.S."/>
            <person name="Blattner F.R."/>
            <person name="Perry R.D."/>
        </authorList>
    </citation>
    <scope>NUCLEOTIDE SEQUENCE [LARGE SCALE GENOMIC DNA]</scope>
    <source>
        <strain>KIM10+ / Biovar Mediaevalis</strain>
    </source>
</reference>
<reference key="3">
    <citation type="journal article" date="2004" name="DNA Res.">
        <title>Complete genome sequence of Yersinia pestis strain 91001, an isolate avirulent to humans.</title>
        <authorList>
            <person name="Song Y."/>
            <person name="Tong Z."/>
            <person name="Wang J."/>
            <person name="Wang L."/>
            <person name="Guo Z."/>
            <person name="Han Y."/>
            <person name="Zhang J."/>
            <person name="Pei D."/>
            <person name="Zhou D."/>
            <person name="Qin H."/>
            <person name="Pang X."/>
            <person name="Han Y."/>
            <person name="Zhai J."/>
            <person name="Li M."/>
            <person name="Cui B."/>
            <person name="Qi Z."/>
            <person name="Jin L."/>
            <person name="Dai R."/>
            <person name="Chen F."/>
            <person name="Li S."/>
            <person name="Ye C."/>
            <person name="Du Z."/>
            <person name="Lin W."/>
            <person name="Wang J."/>
            <person name="Yu J."/>
            <person name="Yang H."/>
            <person name="Wang J."/>
            <person name="Huang P."/>
            <person name="Yang R."/>
        </authorList>
    </citation>
    <scope>NUCLEOTIDE SEQUENCE [LARGE SCALE GENOMIC DNA]</scope>
    <source>
        <strain>91001 / Biovar Mediaevalis</strain>
    </source>
</reference>
<proteinExistence type="inferred from homology"/>
<organism>
    <name type="scientific">Yersinia pestis</name>
    <dbReference type="NCBI Taxonomy" id="632"/>
    <lineage>
        <taxon>Bacteria</taxon>
        <taxon>Pseudomonadati</taxon>
        <taxon>Pseudomonadota</taxon>
        <taxon>Gammaproteobacteria</taxon>
        <taxon>Enterobacterales</taxon>
        <taxon>Yersiniaceae</taxon>
        <taxon>Yersinia</taxon>
    </lineage>
</organism>
<keyword id="KW-0067">ATP-binding</keyword>
<keyword id="KW-0963">Cytoplasm</keyword>
<keyword id="KW-0418">Kinase</keyword>
<keyword id="KW-0460">Magnesium</keyword>
<keyword id="KW-0479">Metal-binding</keyword>
<keyword id="KW-0547">Nucleotide-binding</keyword>
<keyword id="KW-1185">Reference proteome</keyword>
<keyword id="KW-0808">Transferase</keyword>
<comment type="function">
    <text evidence="1">Catalyzes the formation of acetyl phosphate from acetate and ATP. Can also catalyze the reverse reaction.</text>
</comment>
<comment type="catalytic activity">
    <reaction evidence="1">
        <text>acetate + ATP = acetyl phosphate + ADP</text>
        <dbReference type="Rhea" id="RHEA:11352"/>
        <dbReference type="ChEBI" id="CHEBI:22191"/>
        <dbReference type="ChEBI" id="CHEBI:30089"/>
        <dbReference type="ChEBI" id="CHEBI:30616"/>
        <dbReference type="ChEBI" id="CHEBI:456216"/>
        <dbReference type="EC" id="2.7.2.1"/>
    </reaction>
</comment>
<comment type="cofactor">
    <cofactor evidence="1">
        <name>Mg(2+)</name>
        <dbReference type="ChEBI" id="CHEBI:18420"/>
    </cofactor>
    <cofactor evidence="1">
        <name>Mn(2+)</name>
        <dbReference type="ChEBI" id="CHEBI:29035"/>
    </cofactor>
    <text evidence="1">Mg(2+). Can also accept Mn(2+).</text>
</comment>
<comment type="pathway">
    <text evidence="1">Metabolic intermediate biosynthesis; acetyl-CoA biosynthesis; acetyl-CoA from acetate: step 1/2.</text>
</comment>
<comment type="subunit">
    <text evidence="1">Homodimer.</text>
</comment>
<comment type="subcellular location">
    <subcellularLocation>
        <location evidence="1">Cytoplasm</location>
    </subcellularLocation>
</comment>
<comment type="similarity">
    <text evidence="1">Belongs to the acetokinase family.</text>
</comment>
<gene>
    <name evidence="1" type="primary">ackA</name>
    <name type="ordered locus">YPO2566</name>
    <name type="ordered locus">y1622</name>
    <name type="ordered locus">YP_2377</name>
</gene>
<sequence length="400" mass="43018">MSSKLVLVLNCGSSSLKFAIIDATNGEEHISGLAECFHLPEARIKWKVDGGKQEAALGAGAAHSEALNFIVNTILAQKPALSAQLTAIGHRIVHGGEKFTSSVIVTEDVIQGIKDSIPFAPLHNPAHLIGIAEALKSFPNLADKNVAVFDTAFHQTMPEESYLYALPYSLYKDHGIRRYGAHGTSHFYVSQEAAKILNKPLEELNVITCHLGNGGSVTAVRNGKCVDTSMGLTPLEGLVMGTRSGDLDPAIIFHLHDAMGMSVDQINTLLTKESGLLGLTEVTSDCRYVEDNYATKADAKRAMDVFCHRLAKYIGSYTALMDGRLDAVVFTGGIGENAAMVRELTLDKLGLLGFEIDHERNMAARFGKSGTITKDSSRLALVIPTNEELVIAQDAARLTA</sequence>
<name>ACKA_YERPE</name>
<protein>
    <recommendedName>
        <fullName evidence="1">Acetate kinase</fullName>
        <ecNumber evidence="1">2.7.2.1</ecNumber>
    </recommendedName>
    <alternativeName>
        <fullName evidence="1">Acetokinase</fullName>
    </alternativeName>
</protein>